<gene>
    <name evidence="1" type="primary">katG1</name>
    <name type="ordered locus">Amet_1570</name>
</gene>
<dbReference type="EC" id="1.11.1.21" evidence="1"/>
<dbReference type="EMBL" id="CP000724">
    <property type="protein sequence ID" value="ABR47750.1"/>
    <property type="molecule type" value="Genomic_DNA"/>
</dbReference>
<dbReference type="SMR" id="A6TNI2"/>
<dbReference type="STRING" id="293826.Amet_1570"/>
<dbReference type="PeroxiBase" id="2533">
    <property type="entry name" value="AmeCP01_QYMF"/>
</dbReference>
<dbReference type="KEGG" id="amt:Amet_1570"/>
<dbReference type="eggNOG" id="COG0376">
    <property type="taxonomic scope" value="Bacteria"/>
</dbReference>
<dbReference type="HOGENOM" id="CLU_025424_2_0_9"/>
<dbReference type="OrthoDB" id="9759743at2"/>
<dbReference type="Proteomes" id="UP000001572">
    <property type="component" value="Chromosome"/>
</dbReference>
<dbReference type="GO" id="GO:0005829">
    <property type="term" value="C:cytosol"/>
    <property type="evidence" value="ECO:0007669"/>
    <property type="project" value="TreeGrafter"/>
</dbReference>
<dbReference type="GO" id="GO:0004096">
    <property type="term" value="F:catalase activity"/>
    <property type="evidence" value="ECO:0007669"/>
    <property type="project" value="UniProtKB-UniRule"/>
</dbReference>
<dbReference type="GO" id="GO:0020037">
    <property type="term" value="F:heme binding"/>
    <property type="evidence" value="ECO:0007669"/>
    <property type="project" value="InterPro"/>
</dbReference>
<dbReference type="GO" id="GO:0046872">
    <property type="term" value="F:metal ion binding"/>
    <property type="evidence" value="ECO:0007669"/>
    <property type="project" value="UniProtKB-KW"/>
</dbReference>
<dbReference type="GO" id="GO:0070301">
    <property type="term" value="P:cellular response to hydrogen peroxide"/>
    <property type="evidence" value="ECO:0007669"/>
    <property type="project" value="TreeGrafter"/>
</dbReference>
<dbReference type="GO" id="GO:0042744">
    <property type="term" value="P:hydrogen peroxide catabolic process"/>
    <property type="evidence" value="ECO:0007669"/>
    <property type="project" value="UniProtKB-KW"/>
</dbReference>
<dbReference type="CDD" id="cd00649">
    <property type="entry name" value="catalase_peroxidase_1"/>
    <property type="match status" value="1"/>
</dbReference>
<dbReference type="CDD" id="cd08200">
    <property type="entry name" value="catalase_peroxidase_2"/>
    <property type="match status" value="1"/>
</dbReference>
<dbReference type="FunFam" id="1.10.420.10:FF:000002">
    <property type="entry name" value="Catalase-peroxidase"/>
    <property type="match status" value="1"/>
</dbReference>
<dbReference type="FunFam" id="1.10.420.10:FF:000004">
    <property type="entry name" value="Catalase-peroxidase"/>
    <property type="match status" value="1"/>
</dbReference>
<dbReference type="FunFam" id="1.10.520.10:FF:000002">
    <property type="entry name" value="Catalase-peroxidase"/>
    <property type="match status" value="1"/>
</dbReference>
<dbReference type="FunFam" id="1.10.520.10:FF:000004">
    <property type="entry name" value="Catalase-peroxidase"/>
    <property type="match status" value="1"/>
</dbReference>
<dbReference type="Gene3D" id="1.10.520.10">
    <property type="match status" value="2"/>
</dbReference>
<dbReference type="Gene3D" id="1.10.420.10">
    <property type="entry name" value="Peroxidase, domain 2"/>
    <property type="match status" value="2"/>
</dbReference>
<dbReference type="HAMAP" id="MF_01961">
    <property type="entry name" value="Catal_peroxid"/>
    <property type="match status" value="1"/>
</dbReference>
<dbReference type="InterPro" id="IPR000763">
    <property type="entry name" value="Catalase_peroxidase"/>
</dbReference>
<dbReference type="InterPro" id="IPR002016">
    <property type="entry name" value="Haem_peroxidase"/>
</dbReference>
<dbReference type="InterPro" id="IPR010255">
    <property type="entry name" value="Haem_peroxidase_sf"/>
</dbReference>
<dbReference type="InterPro" id="IPR019794">
    <property type="entry name" value="Peroxidases_AS"/>
</dbReference>
<dbReference type="InterPro" id="IPR019793">
    <property type="entry name" value="Peroxidases_heam-ligand_BS"/>
</dbReference>
<dbReference type="NCBIfam" id="TIGR00198">
    <property type="entry name" value="cat_per_HPI"/>
    <property type="match status" value="1"/>
</dbReference>
<dbReference type="NCBIfam" id="NF011635">
    <property type="entry name" value="PRK15061.1"/>
    <property type="match status" value="1"/>
</dbReference>
<dbReference type="PANTHER" id="PTHR30555:SF0">
    <property type="entry name" value="CATALASE-PEROXIDASE"/>
    <property type="match status" value="1"/>
</dbReference>
<dbReference type="PANTHER" id="PTHR30555">
    <property type="entry name" value="HYDROPEROXIDASE I, BIFUNCTIONAL CATALASE-PEROXIDASE"/>
    <property type="match status" value="1"/>
</dbReference>
<dbReference type="Pfam" id="PF00141">
    <property type="entry name" value="peroxidase"/>
    <property type="match status" value="2"/>
</dbReference>
<dbReference type="PRINTS" id="PR00460">
    <property type="entry name" value="BPEROXIDASE"/>
</dbReference>
<dbReference type="PRINTS" id="PR00458">
    <property type="entry name" value="PEROXIDASE"/>
</dbReference>
<dbReference type="SUPFAM" id="SSF48113">
    <property type="entry name" value="Heme-dependent peroxidases"/>
    <property type="match status" value="2"/>
</dbReference>
<dbReference type="PROSITE" id="PS00435">
    <property type="entry name" value="PEROXIDASE_1"/>
    <property type="match status" value="1"/>
</dbReference>
<dbReference type="PROSITE" id="PS00436">
    <property type="entry name" value="PEROXIDASE_2"/>
    <property type="match status" value="1"/>
</dbReference>
<dbReference type="PROSITE" id="PS50873">
    <property type="entry name" value="PEROXIDASE_4"/>
    <property type="match status" value="1"/>
</dbReference>
<evidence type="ECO:0000255" key="1">
    <source>
        <dbReference type="HAMAP-Rule" id="MF_01961"/>
    </source>
</evidence>
<evidence type="ECO:0000256" key="2">
    <source>
        <dbReference type="SAM" id="MobiDB-lite"/>
    </source>
</evidence>
<organism>
    <name type="scientific">Alkaliphilus metalliredigens (strain QYMF)</name>
    <dbReference type="NCBI Taxonomy" id="293826"/>
    <lineage>
        <taxon>Bacteria</taxon>
        <taxon>Bacillati</taxon>
        <taxon>Bacillota</taxon>
        <taxon>Clostridia</taxon>
        <taxon>Peptostreptococcales</taxon>
        <taxon>Natronincolaceae</taxon>
        <taxon>Alkaliphilus</taxon>
    </lineage>
</organism>
<feature type="chain" id="PRO_0000354718" description="Catalase-peroxidase 1">
    <location>
        <begin position="1"/>
        <end position="730"/>
    </location>
</feature>
<feature type="region of interest" description="Disordered" evidence="2">
    <location>
        <begin position="1"/>
        <end position="24"/>
    </location>
</feature>
<feature type="active site" description="Proton acceptor" evidence="1">
    <location>
        <position position="96"/>
    </location>
</feature>
<feature type="binding site" description="axial binding residue" evidence="1">
    <location>
        <position position="259"/>
    </location>
    <ligand>
        <name>heme b</name>
        <dbReference type="ChEBI" id="CHEBI:60344"/>
    </ligand>
    <ligandPart>
        <name>Fe</name>
        <dbReference type="ChEBI" id="CHEBI:18248"/>
    </ligandPart>
</feature>
<feature type="site" description="Transition state stabilizer" evidence="1">
    <location>
        <position position="92"/>
    </location>
</feature>
<feature type="cross-link" description="Tryptophyl-tyrosyl-methioninium (Trp-Tyr) (with M-244)" evidence="1">
    <location>
        <begin position="95"/>
        <end position="218"/>
    </location>
</feature>
<feature type="cross-link" description="Tryptophyl-tyrosyl-methioninium (Tyr-Met) (with W-95)" evidence="1">
    <location>
        <begin position="218"/>
        <end position="244"/>
    </location>
</feature>
<protein>
    <recommendedName>
        <fullName evidence="1">Catalase-peroxidase 1</fullName>
        <shortName evidence="1">CP 1</shortName>
        <ecNumber evidence="1">1.11.1.21</ecNumber>
    </recommendedName>
    <alternativeName>
        <fullName evidence="1">Peroxidase/catalase 1</fullName>
    </alternativeName>
</protein>
<sequence length="730" mass="80734">MQEKGKCPVTGMTKHKTSGGTTNQDWWPNQLNLKMLHQNPTMRNPMGERFNYAEEFKKLDFEALKNDLYALMTDSQEWWPADYGHYGPLFIRMAWHSAGTYRMGDGRGGAGTGNQRFAPLNSWPDNVNLDKARRLLWPIKQKYGKKISWADLMILAGNCALESMGFKTFGFAGGREDIWEPEEDIYWGQENEWLGDKRYSGDRELENPLAAVQMGLIYVNPEGPNGQPSALASGKDIRDTFARMAMNDEETVALVAGGHTFGKCHGAGSATHVGPEPEAANIEEQGLGWKNSMGSGKGIHTISSGIEGAWTPTPIKWDNSYLDTLFNYDWDLVKSPAGAWQWVPTDPTAADSVPDAHDPSKRHAPMMTTADLALRMDPIYGPIAKGFRENPEAFADAFGRAWFKLTHRDMGPRTRFLGPEVPTEELIWQDPVPAVDFELIDEDDITGLKGKIIDSGLSLSELVSTAWASASSFRGSDKRGGANGARIRLAPQKDWEVNQPEQLQTVLQALEKIQDTFNSAQSGKKRISLADLIVLAGCAGVEQAAKNAGFDVCVPFTPGRTDASQEQTEVESFSVLEPMADGFRNYSKGKYTISAEKLLVDRTQLLGLTAPEMTVLVGGMRVLNANYNKSQQGVLTKRPENLTNDFFVNLLDMDTAWKVTAEGGDMFEGIDRKTGELKWTGTGVDLVFGSNSELRAIAEVYASDDAKQKFVEDFVTAWNKVMNADRFDLA</sequence>
<comment type="function">
    <text evidence="1">Bifunctional enzyme with both catalase and broad-spectrum peroxidase activity.</text>
</comment>
<comment type="catalytic activity">
    <reaction evidence="1">
        <text>H2O2 + AH2 = A + 2 H2O</text>
        <dbReference type="Rhea" id="RHEA:30275"/>
        <dbReference type="ChEBI" id="CHEBI:13193"/>
        <dbReference type="ChEBI" id="CHEBI:15377"/>
        <dbReference type="ChEBI" id="CHEBI:16240"/>
        <dbReference type="ChEBI" id="CHEBI:17499"/>
        <dbReference type="EC" id="1.11.1.21"/>
    </reaction>
</comment>
<comment type="catalytic activity">
    <reaction evidence="1">
        <text>2 H2O2 = O2 + 2 H2O</text>
        <dbReference type="Rhea" id="RHEA:20309"/>
        <dbReference type="ChEBI" id="CHEBI:15377"/>
        <dbReference type="ChEBI" id="CHEBI:15379"/>
        <dbReference type="ChEBI" id="CHEBI:16240"/>
        <dbReference type="EC" id="1.11.1.21"/>
    </reaction>
</comment>
<comment type="cofactor">
    <cofactor evidence="1">
        <name>heme b</name>
        <dbReference type="ChEBI" id="CHEBI:60344"/>
    </cofactor>
    <text evidence="1">Binds 1 heme b (iron(II)-protoporphyrin IX) group per dimer.</text>
</comment>
<comment type="subunit">
    <text evidence="1">Homodimer or homotetramer.</text>
</comment>
<comment type="PTM">
    <text evidence="1">Formation of the three residue Trp-Tyr-Met cross-link is important for the catalase, but not the peroxidase activity of the enzyme.</text>
</comment>
<comment type="similarity">
    <text evidence="1">Belongs to the peroxidase family. Peroxidase/catalase subfamily.</text>
</comment>
<keyword id="KW-0349">Heme</keyword>
<keyword id="KW-0376">Hydrogen peroxide</keyword>
<keyword id="KW-0408">Iron</keyword>
<keyword id="KW-0479">Metal-binding</keyword>
<keyword id="KW-0560">Oxidoreductase</keyword>
<keyword id="KW-0575">Peroxidase</keyword>
<keyword id="KW-1185">Reference proteome</keyword>
<reference key="1">
    <citation type="journal article" date="2016" name="Genome Announc.">
        <title>Complete genome sequence of Alkaliphilus metalliredigens strain QYMF, an alkaliphilic and metal-reducing bacterium isolated from borax-contaminated leachate ponds.</title>
        <authorList>
            <person name="Hwang C."/>
            <person name="Copeland A."/>
            <person name="Lucas S."/>
            <person name="Lapidus A."/>
            <person name="Barry K."/>
            <person name="Detter J.C."/>
            <person name="Glavina Del Rio T."/>
            <person name="Hammon N."/>
            <person name="Israni S."/>
            <person name="Dalin E."/>
            <person name="Tice H."/>
            <person name="Pitluck S."/>
            <person name="Chertkov O."/>
            <person name="Brettin T."/>
            <person name="Bruce D."/>
            <person name="Han C."/>
            <person name="Schmutz J."/>
            <person name="Larimer F."/>
            <person name="Land M.L."/>
            <person name="Hauser L."/>
            <person name="Kyrpides N."/>
            <person name="Mikhailova N."/>
            <person name="Ye Q."/>
            <person name="Zhou J."/>
            <person name="Richardson P."/>
            <person name="Fields M.W."/>
        </authorList>
    </citation>
    <scope>NUCLEOTIDE SEQUENCE [LARGE SCALE GENOMIC DNA]</scope>
    <source>
        <strain>QYMF</strain>
    </source>
</reference>
<proteinExistence type="inferred from homology"/>
<name>KATG1_ALKMQ</name>
<accession>A6TNI2</accession>